<evidence type="ECO:0000255" key="1">
    <source>
        <dbReference type="HAMAP-Rule" id="MF_00023"/>
    </source>
</evidence>
<evidence type="ECO:0000256" key="2">
    <source>
        <dbReference type="SAM" id="MobiDB-lite"/>
    </source>
</evidence>
<proteinExistence type="inferred from homology"/>
<name>SSRP_THIDA</name>
<reference key="1">
    <citation type="journal article" date="2006" name="J. Bacteriol.">
        <title>The genome sequence of the obligately chemolithoautotrophic, facultatively anaerobic bacterium Thiobacillus denitrificans.</title>
        <authorList>
            <person name="Beller H.R."/>
            <person name="Chain P.S."/>
            <person name="Letain T.E."/>
            <person name="Chakicherla A."/>
            <person name="Larimer F.W."/>
            <person name="Richardson P.M."/>
            <person name="Coleman M.A."/>
            <person name="Wood A.P."/>
            <person name="Kelly D.P."/>
        </authorList>
    </citation>
    <scope>NUCLEOTIDE SEQUENCE [LARGE SCALE GENOMIC DNA]</scope>
    <source>
        <strain>ATCC 25259 / T1</strain>
    </source>
</reference>
<dbReference type="EMBL" id="CP000116">
    <property type="protein sequence ID" value="AAZ97709.1"/>
    <property type="molecule type" value="Genomic_DNA"/>
</dbReference>
<dbReference type="RefSeq" id="WP_011312268.1">
    <property type="nucleotide sequence ID" value="NC_007404.1"/>
</dbReference>
<dbReference type="SMR" id="Q3SI24"/>
<dbReference type="STRING" id="292415.Tbd_1756"/>
<dbReference type="KEGG" id="tbd:Tbd_1756"/>
<dbReference type="eggNOG" id="COG0691">
    <property type="taxonomic scope" value="Bacteria"/>
</dbReference>
<dbReference type="HOGENOM" id="CLU_108953_3_0_4"/>
<dbReference type="OrthoDB" id="9805462at2"/>
<dbReference type="Proteomes" id="UP000008291">
    <property type="component" value="Chromosome"/>
</dbReference>
<dbReference type="GO" id="GO:0005829">
    <property type="term" value="C:cytosol"/>
    <property type="evidence" value="ECO:0007669"/>
    <property type="project" value="TreeGrafter"/>
</dbReference>
<dbReference type="GO" id="GO:0003723">
    <property type="term" value="F:RNA binding"/>
    <property type="evidence" value="ECO:0007669"/>
    <property type="project" value="UniProtKB-UniRule"/>
</dbReference>
<dbReference type="GO" id="GO:0070929">
    <property type="term" value="P:trans-translation"/>
    <property type="evidence" value="ECO:0007669"/>
    <property type="project" value="UniProtKB-UniRule"/>
</dbReference>
<dbReference type="CDD" id="cd09294">
    <property type="entry name" value="SmpB"/>
    <property type="match status" value="1"/>
</dbReference>
<dbReference type="Gene3D" id="2.40.280.10">
    <property type="match status" value="1"/>
</dbReference>
<dbReference type="HAMAP" id="MF_00023">
    <property type="entry name" value="SmpB"/>
    <property type="match status" value="1"/>
</dbReference>
<dbReference type="InterPro" id="IPR023620">
    <property type="entry name" value="SmpB"/>
</dbReference>
<dbReference type="InterPro" id="IPR000037">
    <property type="entry name" value="SsrA-bd_prot"/>
</dbReference>
<dbReference type="InterPro" id="IPR020081">
    <property type="entry name" value="SsrA-bd_prot_CS"/>
</dbReference>
<dbReference type="NCBIfam" id="NF003843">
    <property type="entry name" value="PRK05422.1"/>
    <property type="match status" value="1"/>
</dbReference>
<dbReference type="NCBIfam" id="TIGR00086">
    <property type="entry name" value="smpB"/>
    <property type="match status" value="1"/>
</dbReference>
<dbReference type="PANTHER" id="PTHR30308:SF2">
    <property type="entry name" value="SSRA-BINDING PROTEIN"/>
    <property type="match status" value="1"/>
</dbReference>
<dbReference type="PANTHER" id="PTHR30308">
    <property type="entry name" value="TMRNA-BINDING COMPONENT OF TRANS-TRANSLATION TAGGING COMPLEX"/>
    <property type="match status" value="1"/>
</dbReference>
<dbReference type="Pfam" id="PF01668">
    <property type="entry name" value="SmpB"/>
    <property type="match status" value="1"/>
</dbReference>
<dbReference type="SUPFAM" id="SSF74982">
    <property type="entry name" value="Small protein B (SmpB)"/>
    <property type="match status" value="1"/>
</dbReference>
<dbReference type="PROSITE" id="PS01317">
    <property type="entry name" value="SSRP"/>
    <property type="match status" value="1"/>
</dbReference>
<keyword id="KW-0963">Cytoplasm</keyword>
<keyword id="KW-1185">Reference proteome</keyword>
<keyword id="KW-0694">RNA-binding</keyword>
<sequence>MSIADNKKAFHDYFIEERFEAGLVLEGWEVKAIRAGRVQLKEAYVVVKNGAVYLIGCHISPLPTASTHIHPDPTRSRKLLLHAAEINKLIGKTERAGFTLVPLDMHYSKGRIKLEIGLAKGKKQHDKRAAEKDREWQREKQRLVRSAQH</sequence>
<protein>
    <recommendedName>
        <fullName evidence="1">SsrA-binding protein</fullName>
    </recommendedName>
    <alternativeName>
        <fullName evidence="1">Small protein B</fullName>
    </alternativeName>
</protein>
<feature type="chain" id="PRO_1000002180" description="SsrA-binding protein">
    <location>
        <begin position="1"/>
        <end position="149"/>
    </location>
</feature>
<feature type="region of interest" description="Disordered" evidence="2">
    <location>
        <begin position="121"/>
        <end position="149"/>
    </location>
</feature>
<feature type="compositionally biased region" description="Basic and acidic residues" evidence="2">
    <location>
        <begin position="127"/>
        <end position="142"/>
    </location>
</feature>
<comment type="function">
    <text evidence="1">Required for rescue of stalled ribosomes mediated by trans-translation. Binds to transfer-messenger RNA (tmRNA), required for stable association of tmRNA with ribosomes. tmRNA and SmpB together mimic tRNA shape, replacing the anticodon stem-loop with SmpB. tmRNA is encoded by the ssrA gene; the 2 termini fold to resemble tRNA(Ala) and it encodes a 'tag peptide', a short internal open reading frame. During trans-translation Ala-aminoacylated tmRNA acts like a tRNA, entering the A-site of stalled ribosomes, displacing the stalled mRNA. The ribosome then switches to translate the ORF on the tmRNA; the nascent peptide is terminated with the 'tag peptide' encoded by the tmRNA and targeted for degradation. The ribosome is freed to recommence translation, which seems to be the essential function of trans-translation.</text>
</comment>
<comment type="subcellular location">
    <subcellularLocation>
        <location evidence="1">Cytoplasm</location>
    </subcellularLocation>
    <text evidence="1">The tmRNA-SmpB complex associates with stalled 70S ribosomes.</text>
</comment>
<comment type="similarity">
    <text evidence="1">Belongs to the SmpB family.</text>
</comment>
<organism>
    <name type="scientific">Thiobacillus denitrificans (strain ATCC 25259 / T1)</name>
    <dbReference type="NCBI Taxonomy" id="292415"/>
    <lineage>
        <taxon>Bacteria</taxon>
        <taxon>Pseudomonadati</taxon>
        <taxon>Pseudomonadota</taxon>
        <taxon>Betaproteobacteria</taxon>
        <taxon>Nitrosomonadales</taxon>
        <taxon>Thiobacillaceae</taxon>
        <taxon>Thiobacillus</taxon>
    </lineage>
</organism>
<accession>Q3SI24</accession>
<gene>
    <name evidence="1" type="primary">smpB</name>
    <name type="ordered locus">Tbd_1756</name>
</gene>